<dbReference type="EC" id="5.4.99.27" evidence="1"/>
<dbReference type="EMBL" id="CP001120">
    <property type="protein sequence ID" value="ACF70189.1"/>
    <property type="molecule type" value="Genomic_DNA"/>
</dbReference>
<dbReference type="RefSeq" id="WP_000134246.1">
    <property type="nucleotide sequence ID" value="NC_011083.1"/>
</dbReference>
<dbReference type="SMR" id="B4TFW5"/>
<dbReference type="KEGG" id="seh:SeHA_C3118"/>
<dbReference type="HOGENOM" id="CLU_005281_4_0_6"/>
<dbReference type="Proteomes" id="UP000001866">
    <property type="component" value="Chromosome"/>
</dbReference>
<dbReference type="GO" id="GO:0005829">
    <property type="term" value="C:cytosol"/>
    <property type="evidence" value="ECO:0007669"/>
    <property type="project" value="TreeGrafter"/>
</dbReference>
<dbReference type="GO" id="GO:0003723">
    <property type="term" value="F:RNA binding"/>
    <property type="evidence" value="ECO:0007669"/>
    <property type="project" value="InterPro"/>
</dbReference>
<dbReference type="GO" id="GO:0160150">
    <property type="term" value="F:tRNA pseudouridine(13) synthase activity"/>
    <property type="evidence" value="ECO:0007669"/>
    <property type="project" value="UniProtKB-EC"/>
</dbReference>
<dbReference type="GO" id="GO:0031119">
    <property type="term" value="P:tRNA pseudouridine synthesis"/>
    <property type="evidence" value="ECO:0007669"/>
    <property type="project" value="UniProtKB-UniRule"/>
</dbReference>
<dbReference type="CDD" id="cd02575">
    <property type="entry name" value="PseudoU_synth_EcTruD"/>
    <property type="match status" value="1"/>
</dbReference>
<dbReference type="FunFam" id="3.30.2340.10:FF:000001">
    <property type="entry name" value="tRNA pseudouridine synthase D"/>
    <property type="match status" value="1"/>
</dbReference>
<dbReference type="FunFam" id="3.30.2350.20:FF:000001">
    <property type="entry name" value="tRNA pseudouridine synthase D"/>
    <property type="match status" value="1"/>
</dbReference>
<dbReference type="Gene3D" id="3.30.2350.20">
    <property type="entry name" value="TruD, catalytic domain"/>
    <property type="match status" value="1"/>
</dbReference>
<dbReference type="Gene3D" id="3.30.2340.10">
    <property type="entry name" value="TruD, insertion domain"/>
    <property type="match status" value="1"/>
</dbReference>
<dbReference type="HAMAP" id="MF_01082">
    <property type="entry name" value="TruD"/>
    <property type="match status" value="1"/>
</dbReference>
<dbReference type="InterPro" id="IPR020103">
    <property type="entry name" value="PsdUridine_synth_cat_dom_sf"/>
</dbReference>
<dbReference type="InterPro" id="IPR001656">
    <property type="entry name" value="PsdUridine_synth_TruD"/>
</dbReference>
<dbReference type="InterPro" id="IPR020119">
    <property type="entry name" value="PsdUridine_synth_TruD_CS"/>
</dbReference>
<dbReference type="InterPro" id="IPR011760">
    <property type="entry name" value="PsdUridine_synth_TruD_insert"/>
</dbReference>
<dbReference type="InterPro" id="IPR042214">
    <property type="entry name" value="TruD_catalytic"/>
</dbReference>
<dbReference type="InterPro" id="IPR043165">
    <property type="entry name" value="TruD_insert_sf"/>
</dbReference>
<dbReference type="InterPro" id="IPR050170">
    <property type="entry name" value="TruD_pseudoU_synthase"/>
</dbReference>
<dbReference type="NCBIfam" id="NF002155">
    <property type="entry name" value="PRK00984.1-4"/>
    <property type="match status" value="1"/>
</dbReference>
<dbReference type="NCBIfam" id="TIGR00094">
    <property type="entry name" value="tRNA_TruD_broad"/>
    <property type="match status" value="1"/>
</dbReference>
<dbReference type="PANTHER" id="PTHR47811">
    <property type="entry name" value="TRNA PSEUDOURIDINE SYNTHASE D"/>
    <property type="match status" value="1"/>
</dbReference>
<dbReference type="PANTHER" id="PTHR47811:SF1">
    <property type="entry name" value="TRNA PSEUDOURIDINE SYNTHASE D"/>
    <property type="match status" value="1"/>
</dbReference>
<dbReference type="Pfam" id="PF01142">
    <property type="entry name" value="TruD"/>
    <property type="match status" value="2"/>
</dbReference>
<dbReference type="SUPFAM" id="SSF55120">
    <property type="entry name" value="Pseudouridine synthase"/>
    <property type="match status" value="1"/>
</dbReference>
<dbReference type="PROSITE" id="PS50984">
    <property type="entry name" value="TRUD"/>
    <property type="match status" value="1"/>
</dbReference>
<dbReference type="PROSITE" id="PS01268">
    <property type="entry name" value="UPF0024"/>
    <property type="match status" value="1"/>
</dbReference>
<reference key="1">
    <citation type="journal article" date="2011" name="J. Bacteriol.">
        <title>Comparative genomics of 28 Salmonella enterica isolates: evidence for CRISPR-mediated adaptive sublineage evolution.</title>
        <authorList>
            <person name="Fricke W.F."/>
            <person name="Mammel M.K."/>
            <person name="McDermott P.F."/>
            <person name="Tartera C."/>
            <person name="White D.G."/>
            <person name="Leclerc J.E."/>
            <person name="Ravel J."/>
            <person name="Cebula T.A."/>
        </authorList>
    </citation>
    <scope>NUCLEOTIDE SEQUENCE [LARGE SCALE GENOMIC DNA]</scope>
    <source>
        <strain>SL476</strain>
    </source>
</reference>
<organism>
    <name type="scientific">Salmonella heidelberg (strain SL476)</name>
    <dbReference type="NCBI Taxonomy" id="454169"/>
    <lineage>
        <taxon>Bacteria</taxon>
        <taxon>Pseudomonadati</taxon>
        <taxon>Pseudomonadota</taxon>
        <taxon>Gammaproteobacteria</taxon>
        <taxon>Enterobacterales</taxon>
        <taxon>Enterobacteriaceae</taxon>
        <taxon>Salmonella</taxon>
    </lineage>
</organism>
<evidence type="ECO:0000255" key="1">
    <source>
        <dbReference type="HAMAP-Rule" id="MF_01082"/>
    </source>
</evidence>
<name>TRUD_SALHS</name>
<proteinExistence type="inferred from homology"/>
<feature type="chain" id="PRO_1000136851" description="tRNA pseudouridine synthase D">
    <location>
        <begin position="1"/>
        <end position="349"/>
    </location>
</feature>
<feature type="domain" description="TRUD" evidence="1">
    <location>
        <begin position="155"/>
        <end position="303"/>
    </location>
</feature>
<feature type="active site" description="Nucleophile" evidence="1">
    <location>
        <position position="80"/>
    </location>
</feature>
<feature type="binding site" evidence="1">
    <location>
        <position position="27"/>
    </location>
    <ligand>
        <name>substrate</name>
    </ligand>
</feature>
<feature type="binding site" evidence="1">
    <location>
        <position position="129"/>
    </location>
    <ligand>
        <name>substrate</name>
    </ligand>
</feature>
<feature type="binding site" evidence="1">
    <location>
        <position position="329"/>
    </location>
    <ligand>
        <name>substrate</name>
    </ligand>
</feature>
<sequence>MTEFDNLTWLHGKPQGSGLLKANPEDFVVVEDLGFTPDGEGEHILLRILKNGCNTRFVADALAKFLKIHAREVSFAGQKDKHAVTEQWLCARVPGKEMPDFSAFQLEGCKVLEYARHKRKLRLGALKGNAFTLVLREISDRRDVETRLQAIRDGGVPNYFGAQRFGIGGSNLQGALRWAQSNAPVRDRNKRSFWLSAARSALFNQIVHQRLKKPDFNQVVDGDALQLAGRGSWFVATSEELPELQRRVDEKELMITASLPGSGEWGTQRAALAFEQDAIAQETVLQSLLLREKVEASRRAMLLYPQQLSWNWWDDVTVELRFWLPAGSFATSVVRELINTMGDYAHIAE</sequence>
<protein>
    <recommendedName>
        <fullName evidence="1">tRNA pseudouridine synthase D</fullName>
        <ecNumber evidence="1">5.4.99.27</ecNumber>
    </recommendedName>
    <alternativeName>
        <fullName evidence="1">tRNA pseudouridine(13) synthase</fullName>
    </alternativeName>
    <alternativeName>
        <fullName evidence="1">tRNA pseudouridylate synthase D</fullName>
    </alternativeName>
    <alternativeName>
        <fullName evidence="1">tRNA-uridine isomerase D</fullName>
    </alternativeName>
</protein>
<accession>B4TFW5</accession>
<gene>
    <name evidence="1" type="primary">truD</name>
    <name type="ordered locus">SeHA_C3118</name>
</gene>
<comment type="function">
    <text evidence="1">Responsible for synthesis of pseudouridine from uracil-13 in transfer RNAs.</text>
</comment>
<comment type="catalytic activity">
    <reaction evidence="1">
        <text>uridine(13) in tRNA = pseudouridine(13) in tRNA</text>
        <dbReference type="Rhea" id="RHEA:42540"/>
        <dbReference type="Rhea" id="RHEA-COMP:10105"/>
        <dbReference type="Rhea" id="RHEA-COMP:10106"/>
        <dbReference type="ChEBI" id="CHEBI:65314"/>
        <dbReference type="ChEBI" id="CHEBI:65315"/>
        <dbReference type="EC" id="5.4.99.27"/>
    </reaction>
</comment>
<comment type="similarity">
    <text evidence="1">Belongs to the pseudouridine synthase TruD family.</text>
</comment>
<keyword id="KW-0413">Isomerase</keyword>
<keyword id="KW-0819">tRNA processing</keyword>